<dbReference type="EC" id="3.4.21.-"/>
<dbReference type="EMBL" id="AY862982">
    <property type="protein sequence ID" value="AAW57544.1"/>
    <property type="molecule type" value="Genomic_DNA"/>
</dbReference>
<dbReference type="EMBL" id="AY862898">
    <property type="protein sequence ID" value="AAW57544.1"/>
    <property type="status" value="JOINED"/>
    <property type="molecule type" value="Genomic_DNA"/>
</dbReference>
<dbReference type="EMBL" id="AY862905">
    <property type="protein sequence ID" value="AAW57544.1"/>
    <property type="status" value="JOINED"/>
    <property type="molecule type" value="Genomic_DNA"/>
</dbReference>
<dbReference type="EMBL" id="AY862912">
    <property type="protein sequence ID" value="AAW57544.1"/>
    <property type="status" value="JOINED"/>
    <property type="molecule type" value="Genomic_DNA"/>
</dbReference>
<dbReference type="EMBL" id="AY862919">
    <property type="protein sequence ID" value="AAW57544.1"/>
    <property type="status" value="JOINED"/>
    <property type="molecule type" value="Genomic_DNA"/>
</dbReference>
<dbReference type="EMBL" id="AY862926">
    <property type="protein sequence ID" value="AAW57544.1"/>
    <property type="status" value="JOINED"/>
    <property type="molecule type" value="Genomic_DNA"/>
</dbReference>
<dbReference type="EMBL" id="AY862933">
    <property type="protein sequence ID" value="AAW57544.1"/>
    <property type="status" value="JOINED"/>
    <property type="molecule type" value="Genomic_DNA"/>
</dbReference>
<dbReference type="EMBL" id="AY862940">
    <property type="protein sequence ID" value="AAW57544.1"/>
    <property type="status" value="JOINED"/>
    <property type="molecule type" value="Genomic_DNA"/>
</dbReference>
<dbReference type="EMBL" id="AY862947">
    <property type="protein sequence ID" value="AAW57544.1"/>
    <property type="status" value="JOINED"/>
    <property type="molecule type" value="Genomic_DNA"/>
</dbReference>
<dbReference type="EMBL" id="AY862954">
    <property type="protein sequence ID" value="AAW57544.1"/>
    <property type="status" value="JOINED"/>
    <property type="molecule type" value="Genomic_DNA"/>
</dbReference>
<dbReference type="EMBL" id="AY862961">
    <property type="protein sequence ID" value="AAW57544.1"/>
    <property type="status" value="JOINED"/>
    <property type="molecule type" value="Genomic_DNA"/>
</dbReference>
<dbReference type="EMBL" id="AY862968">
    <property type="protein sequence ID" value="AAW57544.1"/>
    <property type="status" value="JOINED"/>
    <property type="molecule type" value="Genomic_DNA"/>
</dbReference>
<dbReference type="EMBL" id="AY862975">
    <property type="protein sequence ID" value="AAW57544.1"/>
    <property type="status" value="JOINED"/>
    <property type="molecule type" value="Genomic_DNA"/>
</dbReference>
<dbReference type="SMR" id="Q5G265"/>
<dbReference type="MEROPS" id="S01.237"/>
<dbReference type="GlyCosmos" id="Q5G265">
    <property type="glycosylation" value="2 sites, No reported glycans"/>
</dbReference>
<dbReference type="GO" id="GO:0030424">
    <property type="term" value="C:axon"/>
    <property type="evidence" value="ECO:0000250"/>
    <property type="project" value="UniProtKB"/>
</dbReference>
<dbReference type="GO" id="GO:0005576">
    <property type="term" value="C:extracellular region"/>
    <property type="evidence" value="ECO:0007669"/>
    <property type="project" value="UniProtKB-SubCell"/>
</dbReference>
<dbReference type="GO" id="GO:0005886">
    <property type="term" value="C:plasma membrane"/>
    <property type="evidence" value="ECO:0000250"/>
    <property type="project" value="UniProtKB"/>
</dbReference>
<dbReference type="GO" id="GO:0004252">
    <property type="term" value="F:serine-type endopeptidase activity"/>
    <property type="evidence" value="ECO:0007669"/>
    <property type="project" value="InterPro"/>
</dbReference>
<dbReference type="GO" id="GO:0006887">
    <property type="term" value="P:exocytosis"/>
    <property type="evidence" value="ECO:0000250"/>
    <property type="project" value="UniProtKB"/>
</dbReference>
<dbReference type="GO" id="GO:0006508">
    <property type="term" value="P:proteolysis"/>
    <property type="evidence" value="ECO:0007669"/>
    <property type="project" value="UniProtKB-KW"/>
</dbReference>
<dbReference type="CDD" id="cd00190">
    <property type="entry name" value="Tryp_SPc"/>
    <property type="match status" value="1"/>
</dbReference>
<dbReference type="FunFam" id="2.40.10.10:FF:000053">
    <property type="entry name" value="Neurotrypsin"/>
    <property type="match status" value="1"/>
</dbReference>
<dbReference type="FunFam" id="2.40.20.10:FF:000010">
    <property type="entry name" value="Neurotrypsin"/>
    <property type="match status" value="1"/>
</dbReference>
<dbReference type="FunFam" id="3.10.250.10:FF:000019">
    <property type="entry name" value="Neurotrypsin"/>
    <property type="match status" value="1"/>
</dbReference>
<dbReference type="FunFam" id="3.10.250.10:FF:000005">
    <property type="entry name" value="Neurotrypsin isoform A"/>
    <property type="match status" value="2"/>
</dbReference>
<dbReference type="FunFam" id="3.10.250.10:FF:000006">
    <property type="entry name" value="neurotrypsin isoform X2"/>
    <property type="match status" value="1"/>
</dbReference>
<dbReference type="Gene3D" id="2.40.20.10">
    <property type="entry name" value="Plasminogen Kringle 4"/>
    <property type="match status" value="1"/>
</dbReference>
<dbReference type="Gene3D" id="3.10.250.10">
    <property type="entry name" value="SRCR-like domain"/>
    <property type="match status" value="4"/>
</dbReference>
<dbReference type="Gene3D" id="2.40.10.10">
    <property type="entry name" value="Trypsin-like serine proteases"/>
    <property type="match status" value="1"/>
</dbReference>
<dbReference type="InterPro" id="IPR000001">
    <property type="entry name" value="Kringle"/>
</dbReference>
<dbReference type="InterPro" id="IPR013806">
    <property type="entry name" value="Kringle-like"/>
</dbReference>
<dbReference type="InterPro" id="IPR018056">
    <property type="entry name" value="Kringle_CS"/>
</dbReference>
<dbReference type="InterPro" id="IPR038178">
    <property type="entry name" value="Kringle_sf"/>
</dbReference>
<dbReference type="InterPro" id="IPR009003">
    <property type="entry name" value="Peptidase_S1_PA"/>
</dbReference>
<dbReference type="InterPro" id="IPR043504">
    <property type="entry name" value="Peptidase_S1_PA_chymotrypsin"/>
</dbReference>
<dbReference type="InterPro" id="IPR001314">
    <property type="entry name" value="Peptidase_S1A"/>
</dbReference>
<dbReference type="InterPro" id="IPR001190">
    <property type="entry name" value="SRCR"/>
</dbReference>
<dbReference type="InterPro" id="IPR036772">
    <property type="entry name" value="SRCR-like_dom_sf"/>
</dbReference>
<dbReference type="InterPro" id="IPR001254">
    <property type="entry name" value="Trypsin_dom"/>
</dbReference>
<dbReference type="InterPro" id="IPR018114">
    <property type="entry name" value="TRYPSIN_HIS"/>
</dbReference>
<dbReference type="InterPro" id="IPR033116">
    <property type="entry name" value="TRYPSIN_SER"/>
</dbReference>
<dbReference type="PANTHER" id="PTHR19331:SF465">
    <property type="entry name" value="EGG PEPTIDE SPERACT RECEPTOR"/>
    <property type="match status" value="1"/>
</dbReference>
<dbReference type="PANTHER" id="PTHR19331">
    <property type="entry name" value="SCAVENGER RECEPTOR DOMAIN-CONTAINING"/>
    <property type="match status" value="1"/>
</dbReference>
<dbReference type="Pfam" id="PF00051">
    <property type="entry name" value="Kringle"/>
    <property type="match status" value="1"/>
</dbReference>
<dbReference type="Pfam" id="PF00530">
    <property type="entry name" value="SRCR"/>
    <property type="match status" value="4"/>
</dbReference>
<dbReference type="Pfam" id="PF00089">
    <property type="entry name" value="Trypsin"/>
    <property type="match status" value="1"/>
</dbReference>
<dbReference type="PRINTS" id="PR00722">
    <property type="entry name" value="CHYMOTRYPSIN"/>
</dbReference>
<dbReference type="PRINTS" id="PR00258">
    <property type="entry name" value="SPERACTRCPTR"/>
</dbReference>
<dbReference type="SMART" id="SM00130">
    <property type="entry name" value="KR"/>
    <property type="match status" value="1"/>
</dbReference>
<dbReference type="SMART" id="SM00202">
    <property type="entry name" value="SR"/>
    <property type="match status" value="4"/>
</dbReference>
<dbReference type="SMART" id="SM00020">
    <property type="entry name" value="Tryp_SPc"/>
    <property type="match status" value="1"/>
</dbReference>
<dbReference type="SUPFAM" id="SSF57440">
    <property type="entry name" value="Kringle-like"/>
    <property type="match status" value="1"/>
</dbReference>
<dbReference type="SUPFAM" id="SSF56487">
    <property type="entry name" value="SRCR-like"/>
    <property type="match status" value="4"/>
</dbReference>
<dbReference type="SUPFAM" id="SSF50494">
    <property type="entry name" value="Trypsin-like serine proteases"/>
    <property type="match status" value="1"/>
</dbReference>
<dbReference type="PROSITE" id="PS00021">
    <property type="entry name" value="KRINGLE_1"/>
    <property type="match status" value="1"/>
</dbReference>
<dbReference type="PROSITE" id="PS50070">
    <property type="entry name" value="KRINGLE_2"/>
    <property type="match status" value="1"/>
</dbReference>
<dbReference type="PROSITE" id="PS00420">
    <property type="entry name" value="SRCR_1"/>
    <property type="match status" value="2"/>
</dbReference>
<dbReference type="PROSITE" id="PS50287">
    <property type="entry name" value="SRCR_2"/>
    <property type="match status" value="4"/>
</dbReference>
<dbReference type="PROSITE" id="PS50240">
    <property type="entry name" value="TRYPSIN_DOM"/>
    <property type="match status" value="1"/>
</dbReference>
<dbReference type="PROSITE" id="PS00134">
    <property type="entry name" value="TRYPSIN_HIS"/>
    <property type="match status" value="1"/>
</dbReference>
<dbReference type="PROSITE" id="PS00135">
    <property type="entry name" value="TRYPSIN_SER"/>
    <property type="match status" value="1"/>
</dbReference>
<gene>
    <name type="primary">PRSS12</name>
</gene>
<accession>Q5G265</accession>
<keyword id="KW-1015">Disulfide bond</keyword>
<keyword id="KW-0325">Glycoprotein</keyword>
<keyword id="KW-0378">Hydrolase</keyword>
<keyword id="KW-0420">Kringle</keyword>
<keyword id="KW-0645">Protease</keyword>
<keyword id="KW-0677">Repeat</keyword>
<keyword id="KW-0964">Secreted</keyword>
<keyword id="KW-0720">Serine protease</keyword>
<keyword id="KW-0732">Signal</keyword>
<proteinExistence type="inferred from homology"/>
<reference key="1">
    <citation type="journal article" date="2005" name="Cytogenet. Genome Res.">
        <title>Genetic evidence of a strong functional constraint of neurotrypsin during primate evolution.</title>
        <authorList>
            <person name="Xu H.L."/>
            <person name="Su B."/>
        </authorList>
    </citation>
    <scope>NUCLEOTIDE SEQUENCE [GENOMIC DNA]</scope>
</reference>
<protein>
    <recommendedName>
        <fullName>Neurotrypsin</fullName>
        <ecNumber>3.4.21.-</ecNumber>
    </recommendedName>
    <alternativeName>
        <fullName>Serine protease 12</fullName>
    </alternativeName>
</protein>
<feature type="signal peptide" evidence="2">
    <location>
        <begin position="1"/>
        <end position="20"/>
    </location>
</feature>
<feature type="chain" id="PRO_0000027668" description="Neurotrypsin">
    <location>
        <begin position="21"/>
        <end position="875"/>
    </location>
</feature>
<feature type="domain" description="Kringle" evidence="3">
    <location>
        <begin position="93"/>
        <end position="165"/>
    </location>
</feature>
<feature type="domain" description="SRCR 1" evidence="4">
    <location>
        <begin position="170"/>
        <end position="271"/>
    </location>
</feature>
<feature type="domain" description="SRCR 2" evidence="4">
    <location>
        <begin position="280"/>
        <end position="381"/>
    </location>
</feature>
<feature type="domain" description="SRCR 3" evidence="4">
    <location>
        <begin position="387"/>
        <end position="487"/>
    </location>
</feature>
<feature type="domain" description="SRCR 4" evidence="4">
    <location>
        <begin position="500"/>
        <end position="601"/>
    </location>
</feature>
<feature type="domain" description="Peptidase S1" evidence="5">
    <location>
        <begin position="631"/>
        <end position="874"/>
    </location>
</feature>
<feature type="region of interest" description="Disordered" evidence="6">
    <location>
        <begin position="51"/>
        <end position="72"/>
    </location>
</feature>
<feature type="region of interest" description="Zymogen activation region">
    <location>
        <begin position="619"/>
        <end position="630"/>
    </location>
</feature>
<feature type="compositionally biased region" description="Pro residues" evidence="6">
    <location>
        <begin position="58"/>
        <end position="71"/>
    </location>
</feature>
<feature type="active site" description="Charge relay system" evidence="1">
    <location>
        <position position="676"/>
    </location>
</feature>
<feature type="active site" description="Charge relay system" evidence="1">
    <location>
        <position position="726"/>
    </location>
</feature>
<feature type="active site" description="Charge relay system" evidence="1">
    <location>
        <position position="825"/>
    </location>
</feature>
<feature type="site" description="Reactive bond homolog" evidence="2">
    <location>
        <begin position="630"/>
        <end position="631"/>
    </location>
</feature>
<feature type="glycosylation site" description="N-linked (GlcNAc...) asparagine" evidence="2">
    <location>
        <position position="26"/>
    </location>
</feature>
<feature type="glycosylation site" description="N-linked (GlcNAc...) asparagine" evidence="2">
    <location>
        <position position="683"/>
    </location>
</feature>
<feature type="disulfide bond" evidence="1">
    <location>
        <begin position="93"/>
        <end position="165"/>
    </location>
</feature>
<feature type="disulfide bond" evidence="1">
    <location>
        <begin position="109"/>
        <end position="149"/>
    </location>
</feature>
<feature type="disulfide bond" evidence="1">
    <location>
        <begin position="138"/>
        <end position="163"/>
    </location>
</feature>
<feature type="disulfide bond" evidence="1">
    <location>
        <begin position="195"/>
        <end position="259"/>
    </location>
</feature>
<feature type="disulfide bond" evidence="1">
    <location>
        <begin position="208"/>
        <end position="269"/>
    </location>
</feature>
<feature type="disulfide bond" evidence="1">
    <location>
        <begin position="239"/>
        <end position="249"/>
    </location>
</feature>
<feature type="disulfide bond" evidence="1">
    <location>
        <begin position="305"/>
        <end position="369"/>
    </location>
</feature>
<feature type="disulfide bond" evidence="1">
    <location>
        <begin position="318"/>
        <end position="379"/>
    </location>
</feature>
<feature type="disulfide bond" evidence="1">
    <location>
        <begin position="349"/>
        <end position="359"/>
    </location>
</feature>
<feature type="disulfide bond" evidence="1">
    <location>
        <begin position="412"/>
        <end position="475"/>
    </location>
</feature>
<feature type="disulfide bond" evidence="1">
    <location>
        <begin position="425"/>
        <end position="485"/>
    </location>
</feature>
<feature type="disulfide bond" evidence="1">
    <location>
        <begin position="455"/>
        <end position="465"/>
    </location>
</feature>
<feature type="disulfide bond" evidence="1">
    <location>
        <begin position="525"/>
        <end position="589"/>
    </location>
</feature>
<feature type="disulfide bond" evidence="1">
    <location>
        <begin position="538"/>
        <end position="599"/>
    </location>
</feature>
<feature type="disulfide bond" evidence="1">
    <location>
        <begin position="569"/>
        <end position="579"/>
    </location>
</feature>
<feature type="disulfide bond" evidence="2">
    <location>
        <begin position="619"/>
        <end position="750"/>
    </location>
</feature>
<feature type="disulfide bond" evidence="1">
    <location>
        <begin position="661"/>
        <end position="677"/>
    </location>
</feature>
<feature type="disulfide bond" evidence="1">
    <location>
        <begin position="765"/>
        <end position="831"/>
    </location>
</feature>
<feature type="disulfide bond" evidence="1">
    <location>
        <begin position="794"/>
        <end position="808"/>
    </location>
</feature>
<feature type="disulfide bond" evidence="1">
    <location>
        <begin position="821"/>
        <end position="850"/>
    </location>
</feature>
<sequence length="875" mass="97180">MTLARFALALLFGVLPEVVGFESVLNDSLHHRHRHSPPPGLLYPHYLPTEQRHRRTRPPPPLPRFPRPPRALPALRPHALQAGHTPEPHPRGCPAGEPWVSVTDFGAPCLRWAEVPPSLERSSPAGWAQLRGQRHNFCRSPDGAGRPWCFYGDARGKVDWGYCDCRHGSVRLRGSKNEFEGTVEVYANGVWGTVCSSHWDDSDASVICHQLQLGGKGIAKQTPFSGLGLIPVYWSNVRCRGDEENILLCEKDIWQGGVCPQKMAAAVMCSFSHGPAFPIIRLVGGSSVHEGRVELYHAGQWGTICDDQWDDADAEVICRQLSLSGIAKAWHQAYFGEGSGPVMLDEVRCTGNELSIEQCPKSSWGEHNCGHKEDAGVSCTPLTDGVIRLAGGKGSHEGRLEVYYSGQWGTVCDDGWTELNTYVVCRQLGFKYGKQASANHFEESAGPIWLDDVSCSGKETRFLQCSRRQWGRHDCSHREDVGIACYPGSEGHRLSLGFPVRLMDGENKKEGRVEVFINGQWGTICDDGWTDKDAAVICRQLGYKGPARARTMAYFGEGKGPIHVDNVKCTGNERSLADCIKQDIGRHNCRHSEDAGVICDYFGKKASGNSNKESLSSVCGLRLLHRRQKRIIGGKNSLRGGWPWQVSLRLKSSHRDGRLLCGATLLSSCWVLTAAHCFKRYGNSTRNYAVRVGDYHTLVPEEFEEEIGVQEIVIHREYRPDSSDYDIALVRLQGPEEQCARFNSHVLPACLPLWRERPQKTASNCYITGWGDTGQAYSRTLQQAAIHLLPKRFCEERYKGRFTGRMLCAGNLHEHKHVDSCQGDSGGPLMCERPGESWVVYGVTSWGYGCGVKDSPGVYTKVSAFVPWIKSVTKL</sequence>
<organism>
    <name type="scientific">Saguinus labiatus</name>
    <name type="common">Red-chested mustached tamarin</name>
    <dbReference type="NCBI Taxonomy" id="78454"/>
    <lineage>
        <taxon>Eukaryota</taxon>
        <taxon>Metazoa</taxon>
        <taxon>Chordata</taxon>
        <taxon>Craniata</taxon>
        <taxon>Vertebrata</taxon>
        <taxon>Euteleostomi</taxon>
        <taxon>Mammalia</taxon>
        <taxon>Eutheria</taxon>
        <taxon>Euarchontoglires</taxon>
        <taxon>Primates</taxon>
        <taxon>Haplorrhini</taxon>
        <taxon>Platyrrhini</taxon>
        <taxon>Cebidae</taxon>
        <taxon>Callitrichinae</taxon>
        <taxon>Saguinus</taxon>
    </lineage>
</organism>
<name>NETR_SAGLB</name>
<comment type="function">
    <text evidence="1">Plays a role in neuronal plasticity and the proteolytic action may subserve structural reorganizations associated with learning and memory operations.</text>
</comment>
<comment type="subcellular location">
    <subcellularLocation>
        <location>Secreted</location>
    </subcellularLocation>
</comment>
<comment type="similarity">
    <text evidence="5">Belongs to the peptidase S1 family.</text>
</comment>
<evidence type="ECO:0000250" key="1"/>
<evidence type="ECO:0000255" key="2"/>
<evidence type="ECO:0000255" key="3">
    <source>
        <dbReference type="PROSITE-ProRule" id="PRU00121"/>
    </source>
</evidence>
<evidence type="ECO:0000255" key="4">
    <source>
        <dbReference type="PROSITE-ProRule" id="PRU00196"/>
    </source>
</evidence>
<evidence type="ECO:0000255" key="5">
    <source>
        <dbReference type="PROSITE-ProRule" id="PRU00274"/>
    </source>
</evidence>
<evidence type="ECO:0000256" key="6">
    <source>
        <dbReference type="SAM" id="MobiDB-lite"/>
    </source>
</evidence>